<accession>C4XU70</accession>
<organism>
    <name type="scientific">Solidesulfovibrio magneticus (strain ATCC 700980 / DSM 13731 / RS-1)</name>
    <name type="common">Desulfovibrio magneticus</name>
    <dbReference type="NCBI Taxonomy" id="573370"/>
    <lineage>
        <taxon>Bacteria</taxon>
        <taxon>Pseudomonadati</taxon>
        <taxon>Thermodesulfobacteriota</taxon>
        <taxon>Desulfovibrionia</taxon>
        <taxon>Desulfovibrionales</taxon>
        <taxon>Desulfovibrionaceae</taxon>
        <taxon>Solidesulfovibrio</taxon>
    </lineage>
</organism>
<protein>
    <recommendedName>
        <fullName evidence="1">Adenine phosphoribosyltransferase</fullName>
        <shortName evidence="1">APRT</shortName>
        <ecNumber evidence="1">2.4.2.7</ecNumber>
    </recommendedName>
</protein>
<dbReference type="EC" id="2.4.2.7" evidence="1"/>
<dbReference type="EMBL" id="AP010904">
    <property type="protein sequence ID" value="BAH76092.1"/>
    <property type="molecule type" value="Genomic_DNA"/>
</dbReference>
<dbReference type="RefSeq" id="WP_015861269.1">
    <property type="nucleotide sequence ID" value="NC_012796.1"/>
</dbReference>
<dbReference type="SMR" id="C4XU70"/>
<dbReference type="STRING" id="573370.DMR_26010"/>
<dbReference type="KEGG" id="dma:DMR_26010"/>
<dbReference type="eggNOG" id="COG0503">
    <property type="taxonomic scope" value="Bacteria"/>
</dbReference>
<dbReference type="HOGENOM" id="CLU_063339_3_0_7"/>
<dbReference type="OrthoDB" id="9803963at2"/>
<dbReference type="UniPathway" id="UPA00588">
    <property type="reaction ID" value="UER00646"/>
</dbReference>
<dbReference type="Proteomes" id="UP000009071">
    <property type="component" value="Chromosome"/>
</dbReference>
<dbReference type="GO" id="GO:0005737">
    <property type="term" value="C:cytoplasm"/>
    <property type="evidence" value="ECO:0007669"/>
    <property type="project" value="UniProtKB-SubCell"/>
</dbReference>
<dbReference type="GO" id="GO:0002055">
    <property type="term" value="F:adenine binding"/>
    <property type="evidence" value="ECO:0007669"/>
    <property type="project" value="TreeGrafter"/>
</dbReference>
<dbReference type="GO" id="GO:0003999">
    <property type="term" value="F:adenine phosphoribosyltransferase activity"/>
    <property type="evidence" value="ECO:0007669"/>
    <property type="project" value="UniProtKB-UniRule"/>
</dbReference>
<dbReference type="GO" id="GO:0016208">
    <property type="term" value="F:AMP binding"/>
    <property type="evidence" value="ECO:0007669"/>
    <property type="project" value="TreeGrafter"/>
</dbReference>
<dbReference type="GO" id="GO:0006168">
    <property type="term" value="P:adenine salvage"/>
    <property type="evidence" value="ECO:0007669"/>
    <property type="project" value="InterPro"/>
</dbReference>
<dbReference type="GO" id="GO:0044209">
    <property type="term" value="P:AMP salvage"/>
    <property type="evidence" value="ECO:0007669"/>
    <property type="project" value="UniProtKB-UniRule"/>
</dbReference>
<dbReference type="GO" id="GO:0006166">
    <property type="term" value="P:purine ribonucleoside salvage"/>
    <property type="evidence" value="ECO:0007669"/>
    <property type="project" value="UniProtKB-KW"/>
</dbReference>
<dbReference type="CDD" id="cd06223">
    <property type="entry name" value="PRTases_typeI"/>
    <property type="match status" value="1"/>
</dbReference>
<dbReference type="FunFam" id="3.40.50.2020:FF:000004">
    <property type="entry name" value="Adenine phosphoribosyltransferase"/>
    <property type="match status" value="1"/>
</dbReference>
<dbReference type="Gene3D" id="3.40.50.2020">
    <property type="match status" value="1"/>
</dbReference>
<dbReference type="HAMAP" id="MF_00004">
    <property type="entry name" value="Aden_phosphoribosyltr"/>
    <property type="match status" value="1"/>
</dbReference>
<dbReference type="InterPro" id="IPR005764">
    <property type="entry name" value="Ade_phspho_trans"/>
</dbReference>
<dbReference type="InterPro" id="IPR000836">
    <property type="entry name" value="PRibTrfase_dom"/>
</dbReference>
<dbReference type="InterPro" id="IPR029057">
    <property type="entry name" value="PRTase-like"/>
</dbReference>
<dbReference type="InterPro" id="IPR050054">
    <property type="entry name" value="UPRTase/APRTase"/>
</dbReference>
<dbReference type="NCBIfam" id="TIGR01090">
    <property type="entry name" value="apt"/>
    <property type="match status" value="1"/>
</dbReference>
<dbReference type="NCBIfam" id="NF002634">
    <property type="entry name" value="PRK02304.1-3"/>
    <property type="match status" value="1"/>
</dbReference>
<dbReference type="NCBIfam" id="NF002636">
    <property type="entry name" value="PRK02304.1-5"/>
    <property type="match status" value="1"/>
</dbReference>
<dbReference type="PANTHER" id="PTHR32315">
    <property type="entry name" value="ADENINE PHOSPHORIBOSYLTRANSFERASE"/>
    <property type="match status" value="1"/>
</dbReference>
<dbReference type="PANTHER" id="PTHR32315:SF3">
    <property type="entry name" value="ADENINE PHOSPHORIBOSYLTRANSFERASE"/>
    <property type="match status" value="1"/>
</dbReference>
<dbReference type="Pfam" id="PF00156">
    <property type="entry name" value="Pribosyltran"/>
    <property type="match status" value="1"/>
</dbReference>
<dbReference type="SUPFAM" id="SSF53271">
    <property type="entry name" value="PRTase-like"/>
    <property type="match status" value="1"/>
</dbReference>
<dbReference type="PROSITE" id="PS00103">
    <property type="entry name" value="PUR_PYR_PR_TRANSFER"/>
    <property type="match status" value="1"/>
</dbReference>
<evidence type="ECO:0000255" key="1">
    <source>
        <dbReference type="HAMAP-Rule" id="MF_00004"/>
    </source>
</evidence>
<feature type="chain" id="PRO_1000201660" description="Adenine phosphoribosyltransferase">
    <location>
        <begin position="1"/>
        <end position="171"/>
    </location>
</feature>
<comment type="function">
    <text evidence="1">Catalyzes a salvage reaction resulting in the formation of AMP, that is energically less costly than de novo synthesis.</text>
</comment>
<comment type="catalytic activity">
    <reaction evidence="1">
        <text>AMP + diphosphate = 5-phospho-alpha-D-ribose 1-diphosphate + adenine</text>
        <dbReference type="Rhea" id="RHEA:16609"/>
        <dbReference type="ChEBI" id="CHEBI:16708"/>
        <dbReference type="ChEBI" id="CHEBI:33019"/>
        <dbReference type="ChEBI" id="CHEBI:58017"/>
        <dbReference type="ChEBI" id="CHEBI:456215"/>
        <dbReference type="EC" id="2.4.2.7"/>
    </reaction>
</comment>
<comment type="pathway">
    <text evidence="1">Purine metabolism; AMP biosynthesis via salvage pathway; AMP from adenine: step 1/1.</text>
</comment>
<comment type="subunit">
    <text evidence="1">Homodimer.</text>
</comment>
<comment type="subcellular location">
    <subcellularLocation>
        <location evidence="1">Cytoplasm</location>
    </subcellularLocation>
</comment>
<comment type="similarity">
    <text evidence="1">Belongs to the purine/pyrimidine phosphoribosyltransferase family.</text>
</comment>
<name>APT_SOLM1</name>
<sequence>MDLRQLIRDIPDYPKEGILFFDITPLLGDPDGFRRAIDLLAERFADSGATKIVAAEARGFIFGAALAYKMGLGFVPVRKPGKLPYKTVSVSYDLEYGSDTLCMHEDALLRDEKVLVIDDLLATGGTLSGVIDLVEHFGADIVGIGVVIELEFLNGKEQLRSYGCESILQIA</sequence>
<keyword id="KW-0963">Cytoplasm</keyword>
<keyword id="KW-0328">Glycosyltransferase</keyword>
<keyword id="KW-0660">Purine salvage</keyword>
<keyword id="KW-0808">Transferase</keyword>
<reference key="1">
    <citation type="journal article" date="2009" name="Genome Res.">
        <title>Whole genome sequence of Desulfovibrio magneticus strain RS-1 revealed common gene clusters in magnetotactic bacteria.</title>
        <authorList>
            <person name="Nakazawa H."/>
            <person name="Arakaki A."/>
            <person name="Narita-Yamada S."/>
            <person name="Yashiro I."/>
            <person name="Jinno K."/>
            <person name="Aoki N."/>
            <person name="Tsuruyama A."/>
            <person name="Okamura Y."/>
            <person name="Tanikawa S."/>
            <person name="Fujita N."/>
            <person name="Takeyama H."/>
            <person name="Matsunaga T."/>
        </authorList>
    </citation>
    <scope>NUCLEOTIDE SEQUENCE [LARGE SCALE GENOMIC DNA]</scope>
    <source>
        <strain>ATCC 700980 / DSM 13731 / RS-1</strain>
    </source>
</reference>
<gene>
    <name evidence="1" type="primary">apt</name>
    <name type="ordered locus">DMR_26010</name>
</gene>
<proteinExistence type="inferred from homology"/>